<protein>
    <recommendedName>
        <fullName evidence="6 7">DNA replication complex GINS protein SLD5</fullName>
    </recommendedName>
    <alternativeName>
        <fullName evidence="8">Protein EMBRYO DEFECTIVE 2812</fullName>
    </alternativeName>
    <alternativeName>
        <fullName evidence="6 7">Protein SYNTHETIC LETHALITY WITH DPB11-1 5</fullName>
    </alternativeName>
</protein>
<proteinExistence type="evidence at protein level"/>
<evidence type="ECO:0000250" key="1">
    <source>
        <dbReference type="UniProtKB" id="Q99LZ3"/>
    </source>
</evidence>
<evidence type="ECO:0000250" key="2">
    <source>
        <dbReference type="UniProtKB" id="Q9BRT9"/>
    </source>
</evidence>
<evidence type="ECO:0000269" key="3">
    <source>
    </source>
</evidence>
<evidence type="ECO:0000269" key="4">
    <source>
    </source>
</evidence>
<evidence type="ECO:0000269" key="5">
    <source>
    </source>
</evidence>
<evidence type="ECO:0000303" key="6">
    <source>
    </source>
</evidence>
<evidence type="ECO:0000303" key="7">
    <source>
    </source>
</evidence>
<evidence type="ECO:0000303" key="8">
    <source>
    </source>
</evidence>
<evidence type="ECO:0000305" key="9"/>
<evidence type="ECO:0000312" key="10">
    <source>
        <dbReference type="Araport" id="AT5G49010"/>
    </source>
</evidence>
<evidence type="ECO:0000312" key="11">
    <source>
        <dbReference type="EMBL" id="BAB10325.1"/>
    </source>
</evidence>
<dbReference type="EMBL" id="AB017061">
    <property type="protein sequence ID" value="BAB10325.1"/>
    <property type="status" value="ALT_SEQ"/>
    <property type="molecule type" value="Genomic_DNA"/>
</dbReference>
<dbReference type="EMBL" id="CP002688">
    <property type="protein sequence ID" value="AED95756.1"/>
    <property type="molecule type" value="Genomic_DNA"/>
</dbReference>
<dbReference type="EMBL" id="BT010406">
    <property type="protein sequence ID" value="AAQ62407.1"/>
    <property type="molecule type" value="mRNA"/>
</dbReference>
<dbReference type="EMBL" id="AK221044">
    <property type="protein sequence ID" value="BAD94796.1"/>
    <property type="molecule type" value="mRNA"/>
</dbReference>
<dbReference type="RefSeq" id="NP_199712.2">
    <property type="nucleotide sequence ID" value="NM_124278.4"/>
</dbReference>
<dbReference type="SMR" id="Q6NQP5"/>
<dbReference type="FunCoup" id="Q6NQP5">
    <property type="interactions" value="3153"/>
</dbReference>
<dbReference type="IntAct" id="Q6NQP5">
    <property type="interactions" value="2"/>
</dbReference>
<dbReference type="STRING" id="3702.Q6NQP5"/>
<dbReference type="PaxDb" id="3702-AT5G49010.1"/>
<dbReference type="ProteomicsDB" id="182945"/>
<dbReference type="EnsemblPlants" id="AT5G49010.1">
    <property type="protein sequence ID" value="AT5G49010.1"/>
    <property type="gene ID" value="AT5G49010"/>
</dbReference>
<dbReference type="GeneID" id="834960"/>
<dbReference type="Gramene" id="AT5G49010.1">
    <property type="protein sequence ID" value="AT5G49010.1"/>
    <property type="gene ID" value="AT5G49010"/>
</dbReference>
<dbReference type="KEGG" id="ath:AT5G49010"/>
<dbReference type="Araport" id="AT5G49010"/>
<dbReference type="TAIR" id="AT5G49010">
    <property type="gene designation" value="SLD5"/>
</dbReference>
<dbReference type="eggNOG" id="KOG3176">
    <property type="taxonomic scope" value="Eukaryota"/>
</dbReference>
<dbReference type="HOGENOM" id="CLU_071893_1_1_1"/>
<dbReference type="InParanoid" id="Q6NQP5"/>
<dbReference type="OMA" id="ILETAWI"/>
<dbReference type="OrthoDB" id="338231at2759"/>
<dbReference type="PhylomeDB" id="Q6NQP5"/>
<dbReference type="PRO" id="PR:Q6NQP5"/>
<dbReference type="Proteomes" id="UP000006548">
    <property type="component" value="Chromosome 5"/>
</dbReference>
<dbReference type="ExpressionAtlas" id="Q6NQP5">
    <property type="expression patterns" value="baseline and differential"/>
</dbReference>
<dbReference type="GO" id="GO:0000811">
    <property type="term" value="C:GINS complex"/>
    <property type="evidence" value="ECO:0000250"/>
    <property type="project" value="TAIR"/>
</dbReference>
<dbReference type="GO" id="GO:0006270">
    <property type="term" value="P:DNA replication initiation"/>
    <property type="evidence" value="ECO:0000304"/>
    <property type="project" value="TAIR"/>
</dbReference>
<dbReference type="CDD" id="cd11711">
    <property type="entry name" value="GINS_A_Sld5"/>
    <property type="match status" value="1"/>
</dbReference>
<dbReference type="CDD" id="cd21692">
    <property type="entry name" value="GINS_B_Sld5"/>
    <property type="match status" value="1"/>
</dbReference>
<dbReference type="FunFam" id="1.20.58.1030:FF:000005">
    <property type="entry name" value="DNA replication complex GINS protein SLD5"/>
    <property type="match status" value="1"/>
</dbReference>
<dbReference type="Gene3D" id="1.20.58.1030">
    <property type="match status" value="1"/>
</dbReference>
<dbReference type="InterPro" id="IPR021151">
    <property type="entry name" value="GINS_A"/>
</dbReference>
<dbReference type="InterPro" id="IPR036224">
    <property type="entry name" value="GINS_bundle-like_dom_sf"/>
</dbReference>
<dbReference type="InterPro" id="IPR008591">
    <property type="entry name" value="GINS_Sld5"/>
</dbReference>
<dbReference type="InterPro" id="IPR031633">
    <property type="entry name" value="SLD5_C"/>
</dbReference>
<dbReference type="InterPro" id="IPR038749">
    <property type="entry name" value="Sld5_GINS_A"/>
</dbReference>
<dbReference type="PANTHER" id="PTHR21206:SF0">
    <property type="entry name" value="DNA REPLICATION COMPLEX GINS PROTEIN SLD5"/>
    <property type="match status" value="1"/>
</dbReference>
<dbReference type="PANTHER" id="PTHR21206">
    <property type="entry name" value="SLD5 PROTEIN"/>
    <property type="match status" value="1"/>
</dbReference>
<dbReference type="Pfam" id="PF05916">
    <property type="entry name" value="Sld5"/>
    <property type="match status" value="1"/>
</dbReference>
<dbReference type="Pfam" id="PF16922">
    <property type="entry name" value="SLD5_C"/>
    <property type="match status" value="1"/>
</dbReference>
<dbReference type="PIRSF" id="PIRSF007764">
    <property type="entry name" value="Sld5"/>
    <property type="match status" value="1"/>
</dbReference>
<dbReference type="SUPFAM" id="SSF158573">
    <property type="entry name" value="GINS helical bundle-like"/>
    <property type="match status" value="1"/>
</dbReference>
<dbReference type="SUPFAM" id="SSF160059">
    <property type="entry name" value="PriA/YqbF domain"/>
    <property type="match status" value="1"/>
</dbReference>
<sequence>MASNSEAGGSADYETLMSTSDVELLKRAWRNEKAAPEILQYEGALVDRAKEQIELVEETIEDYVENGIDPLVVSLYQMDLDRAQFLLRSYLRVRLLKIEKFMFHNLNSEEAERRLSEQEKVFATRCADDLAKHFEETVLLKLPENYQSVLKQSLISEVDDMVPQPHLDTFVVCRSKNFVSLNLYEEGESPETVEMERGDLYFIRYKIVKRAIESGQIDLI</sequence>
<accession>Q6NQP5</accession>
<accession>Q9FI69</accession>
<name>SLD5_ARATH</name>
<comment type="function">
    <text evidence="3 6">The GINS complex plays an essential role in the initiation of DNA replication (PubMed:17556508). Required during embryogenesis (PubMed:22164284).</text>
</comment>
<comment type="subunit">
    <text evidence="2 5">Component of the GINS complex (By similarity). Interacts with EOL1 in the nucleus (PubMed:28428341).</text>
</comment>
<comment type="subcellular location">
    <subcellularLocation>
        <location evidence="1">Nucleus</location>
    </subcellularLocation>
</comment>
<comment type="developmental stage">
    <text evidence="4">Expressed in callus 96 hours after initiation on callus-inducing medium.</text>
</comment>
<comment type="disruption phenotype">
    <text evidence="3">Embryo defective.</text>
</comment>
<comment type="similarity">
    <text evidence="9">Belongs to the GINS4/SLD5 family.</text>
</comment>
<comment type="sequence caution" evidence="9">
    <conflict type="erroneous gene model prediction">
        <sequence resource="EMBL-CDS" id="BAB10325"/>
    </conflict>
</comment>
<comment type="online information" name="Seed defective Arabidopsis mutants">
    <link uri="http://seedgenes.org/MutantList"/>
</comment>
<organism>
    <name type="scientific">Arabidopsis thaliana</name>
    <name type="common">Mouse-ear cress</name>
    <dbReference type="NCBI Taxonomy" id="3702"/>
    <lineage>
        <taxon>Eukaryota</taxon>
        <taxon>Viridiplantae</taxon>
        <taxon>Streptophyta</taxon>
        <taxon>Embryophyta</taxon>
        <taxon>Tracheophyta</taxon>
        <taxon>Spermatophyta</taxon>
        <taxon>Magnoliopsida</taxon>
        <taxon>eudicotyledons</taxon>
        <taxon>Gunneridae</taxon>
        <taxon>Pentapetalae</taxon>
        <taxon>rosids</taxon>
        <taxon>malvids</taxon>
        <taxon>Brassicales</taxon>
        <taxon>Brassicaceae</taxon>
        <taxon>Camelineae</taxon>
        <taxon>Arabidopsis</taxon>
    </lineage>
</organism>
<reference key="1">
    <citation type="journal article" date="1999" name="DNA Res.">
        <title>Structural analysis of Arabidopsis thaliana chromosome 5. IX. Sequence features of the regions of 1,011,550 bp covered by seventeen P1 and TAC clones.</title>
        <authorList>
            <person name="Kaneko T."/>
            <person name="Katoh T."/>
            <person name="Sato S."/>
            <person name="Nakamura Y."/>
            <person name="Asamizu E."/>
            <person name="Kotani H."/>
            <person name="Miyajima N."/>
            <person name="Tabata S."/>
        </authorList>
    </citation>
    <scope>NUCLEOTIDE SEQUENCE [LARGE SCALE GENOMIC DNA]</scope>
    <source>
        <strain>cv. Columbia</strain>
    </source>
</reference>
<reference key="2">
    <citation type="journal article" date="2017" name="Plant J.">
        <title>Araport11: a complete reannotation of the Arabidopsis thaliana reference genome.</title>
        <authorList>
            <person name="Cheng C.Y."/>
            <person name="Krishnakumar V."/>
            <person name="Chan A.P."/>
            <person name="Thibaud-Nissen F."/>
            <person name="Schobel S."/>
            <person name="Town C.D."/>
        </authorList>
    </citation>
    <scope>GENOME REANNOTATION</scope>
    <source>
        <strain>cv. Columbia</strain>
    </source>
</reference>
<reference key="3">
    <citation type="journal article" date="2003" name="Science">
        <title>Empirical analysis of transcriptional activity in the Arabidopsis genome.</title>
        <authorList>
            <person name="Yamada K."/>
            <person name="Lim J."/>
            <person name="Dale J.M."/>
            <person name="Chen H."/>
            <person name="Shinn P."/>
            <person name="Palm C.J."/>
            <person name="Southwick A.M."/>
            <person name="Wu H.C."/>
            <person name="Kim C.J."/>
            <person name="Nguyen M."/>
            <person name="Pham P.K."/>
            <person name="Cheuk R.F."/>
            <person name="Karlin-Newmann G."/>
            <person name="Liu S.X."/>
            <person name="Lam B."/>
            <person name="Sakano H."/>
            <person name="Wu T."/>
            <person name="Yu G."/>
            <person name="Miranda M."/>
            <person name="Quach H.L."/>
            <person name="Tripp M."/>
            <person name="Chang C.H."/>
            <person name="Lee J.M."/>
            <person name="Toriumi M.J."/>
            <person name="Chan M.M."/>
            <person name="Tang C.C."/>
            <person name="Onodera C.S."/>
            <person name="Deng J.M."/>
            <person name="Akiyama K."/>
            <person name="Ansari Y."/>
            <person name="Arakawa T."/>
            <person name="Banh J."/>
            <person name="Banno F."/>
            <person name="Bowser L."/>
            <person name="Brooks S.Y."/>
            <person name="Carninci P."/>
            <person name="Chao Q."/>
            <person name="Choy N."/>
            <person name="Enju A."/>
            <person name="Goldsmith A.D."/>
            <person name="Gurjal M."/>
            <person name="Hansen N.F."/>
            <person name="Hayashizaki Y."/>
            <person name="Johnson-Hopson C."/>
            <person name="Hsuan V.W."/>
            <person name="Iida K."/>
            <person name="Karnes M."/>
            <person name="Khan S."/>
            <person name="Koesema E."/>
            <person name="Ishida J."/>
            <person name="Jiang P.X."/>
            <person name="Jones T."/>
            <person name="Kawai J."/>
            <person name="Kamiya A."/>
            <person name="Meyers C."/>
            <person name="Nakajima M."/>
            <person name="Narusaka M."/>
            <person name="Seki M."/>
            <person name="Sakurai T."/>
            <person name="Satou M."/>
            <person name="Tamse R."/>
            <person name="Vaysberg M."/>
            <person name="Wallender E.K."/>
            <person name="Wong C."/>
            <person name="Yamamura Y."/>
            <person name="Yuan S."/>
            <person name="Shinozaki K."/>
            <person name="Davis R.W."/>
            <person name="Theologis A."/>
            <person name="Ecker J.R."/>
        </authorList>
    </citation>
    <scope>NUCLEOTIDE SEQUENCE [LARGE SCALE MRNA]</scope>
    <source>
        <strain>cv. Columbia</strain>
    </source>
</reference>
<reference key="4">
    <citation type="submission" date="2005-03" db="EMBL/GenBank/DDBJ databases">
        <title>Large-scale analysis of RIKEN Arabidopsis full-length (RAFL) cDNAs.</title>
        <authorList>
            <person name="Totoki Y."/>
            <person name="Seki M."/>
            <person name="Ishida J."/>
            <person name="Nakajima M."/>
            <person name="Enju A."/>
            <person name="Kamiya A."/>
            <person name="Narusaka M."/>
            <person name="Shin-i T."/>
            <person name="Nakagawa M."/>
            <person name="Sakamoto N."/>
            <person name="Oishi K."/>
            <person name="Kohara Y."/>
            <person name="Kobayashi M."/>
            <person name="Toyoda A."/>
            <person name="Sakaki Y."/>
            <person name="Sakurai T."/>
            <person name="Iida K."/>
            <person name="Akiyama K."/>
            <person name="Satou M."/>
            <person name="Toyoda T."/>
            <person name="Konagaya A."/>
            <person name="Carninci P."/>
            <person name="Kawai J."/>
            <person name="Hayashizaki Y."/>
            <person name="Shinozaki K."/>
        </authorList>
    </citation>
    <scope>NUCLEOTIDE SEQUENCE [LARGE SCALE MRNA]</scope>
    <source>
        <strain>cv. Columbia</strain>
    </source>
</reference>
<reference key="5">
    <citation type="journal article" date="2007" name="Plant Physiol.">
        <title>Genome-wide analysis of the core DNA replication machinery in the higher plants Arabidopsis and rice.</title>
        <authorList>
            <person name="Shultz R.W."/>
            <person name="Tatineni V.M."/>
            <person name="Hanley-Bowdoin L."/>
            <person name="Thompson W.F."/>
        </authorList>
    </citation>
    <scope>REVIEW</scope>
</reference>
<reference key="6">
    <citation type="journal article" date="2012" name="Genomics">
        <title>A genome-wide transcriptome profiling reveals the early molecular events during callus initiation in Arabidopsis multiple organs.</title>
        <authorList>
            <person name="Xu K."/>
            <person name="Liu J."/>
            <person name="Fan M."/>
            <person name="Xin W."/>
            <person name="Hu Y."/>
            <person name="Xu C."/>
        </authorList>
    </citation>
    <scope>DEVELOPMENTAL STAGE</scope>
</reference>
<reference key="7">
    <citation type="journal article" date="2011" name="PLoS ONE">
        <title>Molecular foundations of reproductive lethality in Arabidopsis thaliana.</title>
        <authorList>
            <person name="Muralla R."/>
            <person name="Lloyd J."/>
            <person name="Meinke D."/>
        </authorList>
    </citation>
    <scope>FUNCTION</scope>
    <scope>DISRUPTION PHENOTYPE</scope>
</reference>
<reference key="8">
    <citation type="journal article" date="2017" name="Proc. Natl. Acad. Sci. U.S.A.">
        <title>Ctf4-related protein recruits LHP1-PRC2 to maintain H3K27me3 levels in dividing cells in Arabidopsis thaliana.</title>
        <authorList>
            <person name="Zhou Y."/>
            <person name="Tergemina E."/>
            <person name="Cui H."/>
            <person name="Foerderer A."/>
            <person name="Hartwig B."/>
            <person name="Velikkakam James G."/>
            <person name="Schneeberger K."/>
            <person name="Turck F."/>
        </authorList>
    </citation>
    <scope>INTERACTION WITH EOL1</scope>
    <source>
        <strain>cv. Columbia</strain>
    </source>
</reference>
<reference key="9">
    <citation type="journal article" date="2020" name="New Phytol.">
        <title>Genome-wide identification of EMBRYO-DEFECTIVE (EMB) genes required for growth and development in Arabidopsis.</title>
        <authorList>
            <person name="Meinke D.W."/>
        </authorList>
    </citation>
    <scope>REVIEW ON EMBRYO-DEFECTIVE MUTANTS</scope>
</reference>
<keyword id="KW-0235">DNA replication</keyword>
<keyword id="KW-0539">Nucleus</keyword>
<keyword id="KW-1185">Reference proteome</keyword>
<feature type="chain" id="PRO_0000455090" description="DNA replication complex GINS protein SLD5">
    <location>
        <begin position="1"/>
        <end position="220"/>
    </location>
</feature>
<gene>
    <name evidence="6 7" type="primary">SLD5</name>
    <name evidence="8" type="synonym">EMB2812</name>
    <name evidence="10" type="ordered locus">At5g49010</name>
    <name evidence="11" type="ORF">K19E20.14</name>
</gene>